<accession>Q059U7</accession>
<accession>Q80TG0</accession>
<accession>Q8BS60</accession>
<accession>Q8C9Y0</accession>
<comment type="function">
    <text evidence="3 6 7 9 10">Plays a key role in ciliogenesis and embryonic development. Regulator of cilia formation by controlling the organization of the apical actin cytoskeleton and the positioning of the basal bodies at the apical cell surface, which in turn is essential for the normal orientation of elongating ciliary microtubules. Plays a key role in definition of cell polarity via its role in ciliogenesis but not via conversion extension. Has an indirect effect on hedgehog signaling (PubMed:20067783, PubMed:21761479). Proposed to function as core component of the CPLANE (ciliogenesis and planar polarity effectors) complex involved in the recruitment of peripheral IFT-A proteins to basal bodies (By similarity). Required for recruitment of CPLANE2 to the mother centriole (PubMed:29038301). Binds phosphatidylinositol 3-phosphate with highest affinity, followed by phosphatidylinositol 4-phosphate and phosphatidylinositol 5-phosphate (PubMed:35427153).</text>
</comment>
<comment type="subunit">
    <text evidence="3 8 10">Component of the CPLANE (ciliogenesis and planar polarity effectors) complex, composed of INTU, FUZ and WDPCP (PubMed:27158779, PubMed:35427153). Interacts with CPLANE1 (PubMed:27158779). Interacts with NPHP4 and DAAM1; INTU is mediating the interaction between NPHP4 and DAAM1 (By similarity).</text>
</comment>
<comment type="subcellular location">
    <subcellularLocation>
        <location evidence="6">Cytoplasm</location>
    </subcellularLocation>
    <subcellularLocation>
        <location evidence="2">Cell surface</location>
    </subcellularLocation>
    <subcellularLocation>
        <location evidence="9">Cytoplasm</location>
        <location evidence="9">Cytoskeleton</location>
        <location evidence="9">Cilium basal body</location>
    </subcellularLocation>
    <subcellularLocation>
        <location evidence="9">Cytoplasm</location>
        <location evidence="9">Cytoskeleton</location>
        <location evidence="9">Microtubule organizing center</location>
        <location evidence="9">Centrosome</location>
        <location evidence="9">Centriole</location>
    </subcellularLocation>
    <text evidence="2 9">Enriched at the apical surface in ciliated cells (By similarity). Localizes at the transition zone, a region between the basal body and the ciliary axoneme (PubMed:29038301). Recruited to the centriole in a TTBK2-dependent manner (PubMed:29038301).</text>
</comment>
<comment type="alternative products">
    <event type="alternative splicing"/>
    <isoform>
        <id>Q059U7-1</id>
        <name>1</name>
        <sequence type="displayed"/>
    </isoform>
    <isoform>
        <id>Q059U7-2</id>
        <name>2</name>
        <sequence type="described" ref="VSP_042603 VSP_042604 VSP_042605"/>
    </isoform>
</comment>
<comment type="tissue specificity">
    <text evidence="6">Widely expressed in E8.5 and E9.5 wild type embryos. Present in various adult organs (at protein level).</text>
</comment>
<comment type="disruption phenotype">
    <text evidence="6 7">Embryos die at midgestation. Embryos exhibit multiple defects including neural tube closure defects, abnormal dorsal/ventral patterning of the central nervous system and abnormal anterior-posterior patterning of the limbs resulting in severe polydactyly. Fewer and shorter cilia are present in mutant embryos. In mice lacking both Intu and Fuz, the lack of convergent extension and more severe patterning defects in Intu and Fuz mutants does not result from a functional redundancy between these proteins.</text>
</comment>
<comment type="similarity">
    <text evidence="12">Belongs to the inturned family.</text>
</comment>
<name>INTU_MOUSE</name>
<feature type="chain" id="PRO_0000416283" description="Protein inturned">
    <location>
        <begin position="1"/>
        <end position="942"/>
    </location>
</feature>
<feature type="domain" description="PDZ" evidence="4">
    <location>
        <begin position="185"/>
        <end position="267"/>
    </location>
</feature>
<feature type="region of interest" description="Disordered" evidence="5">
    <location>
        <begin position="1"/>
        <end position="56"/>
    </location>
</feature>
<feature type="region of interest" description="Disordered" evidence="5">
    <location>
        <begin position="128"/>
        <end position="156"/>
    </location>
</feature>
<feature type="region of interest" description="Disordered" evidence="5">
    <location>
        <begin position="707"/>
        <end position="751"/>
    </location>
</feature>
<feature type="compositionally biased region" description="Acidic residues" evidence="5">
    <location>
        <begin position="22"/>
        <end position="32"/>
    </location>
</feature>
<feature type="compositionally biased region" description="Low complexity" evidence="5">
    <location>
        <begin position="33"/>
        <end position="48"/>
    </location>
</feature>
<feature type="compositionally biased region" description="Polar residues" evidence="5">
    <location>
        <begin position="137"/>
        <end position="156"/>
    </location>
</feature>
<feature type="modified residue" description="Phosphoserine" evidence="1">
    <location>
        <position position="674"/>
    </location>
</feature>
<feature type="modified residue" description="Phosphoserine" evidence="14">
    <location>
        <position position="678"/>
    </location>
</feature>
<feature type="splice variant" id="VSP_042603" description="In isoform 2." evidence="11">
    <original>MAGLARGDSRGRPPELPGDLSSQEEEEEEGDSDAGASSLGSYSSASSDT</original>
    <variation>MFQGGGRTSIPKPAPRNLEDLDSVQRVLLHS</variation>
    <location>
        <begin position="1"/>
        <end position="49"/>
    </location>
</feature>
<feature type="splice variant" id="VSP_042604" description="In isoform 2." evidence="11">
    <original>DVLVAVNDVDVTSEN</original>
    <variation>KCCSQLPSLFAEVHG</variation>
    <location>
        <begin position="233"/>
        <end position="247"/>
    </location>
</feature>
<feature type="splice variant" id="VSP_042605" description="In isoform 2." evidence="11">
    <location>
        <begin position="248"/>
        <end position="942"/>
    </location>
</feature>
<feature type="sequence conflict" description="In Ref. 1; BAC28943." evidence="12" ref="1">
    <original>D</original>
    <variation>H</variation>
    <location>
        <position position="538"/>
    </location>
</feature>
<feature type="helix" evidence="15">
    <location>
        <begin position="55"/>
        <end position="58"/>
    </location>
</feature>
<feature type="strand" evidence="15">
    <location>
        <begin position="65"/>
        <end position="70"/>
    </location>
</feature>
<feature type="helix" evidence="15">
    <location>
        <begin position="304"/>
        <end position="306"/>
    </location>
</feature>
<feature type="strand" evidence="15">
    <location>
        <begin position="312"/>
        <end position="317"/>
    </location>
</feature>
<feature type="turn" evidence="15">
    <location>
        <begin position="327"/>
        <end position="330"/>
    </location>
</feature>
<feature type="strand" evidence="15">
    <location>
        <begin position="331"/>
        <end position="335"/>
    </location>
</feature>
<feature type="helix" evidence="15">
    <location>
        <begin position="339"/>
        <end position="345"/>
    </location>
</feature>
<feature type="helix" evidence="15">
    <location>
        <begin position="346"/>
        <end position="348"/>
    </location>
</feature>
<feature type="helix" evidence="15">
    <location>
        <begin position="349"/>
        <end position="362"/>
    </location>
</feature>
<feature type="strand" evidence="15">
    <location>
        <begin position="366"/>
        <end position="373"/>
    </location>
</feature>
<feature type="strand" evidence="15">
    <location>
        <begin position="376"/>
        <end position="385"/>
    </location>
</feature>
<feature type="strand" evidence="15">
    <location>
        <begin position="388"/>
        <end position="395"/>
    </location>
</feature>
<feature type="turn" evidence="15">
    <location>
        <begin position="396"/>
        <end position="398"/>
    </location>
</feature>
<feature type="helix" evidence="15">
    <location>
        <begin position="401"/>
        <end position="419"/>
    </location>
</feature>
<feature type="helix" evidence="15">
    <location>
        <begin position="422"/>
        <end position="426"/>
    </location>
</feature>
<feature type="helix" evidence="15">
    <location>
        <begin position="432"/>
        <end position="447"/>
    </location>
</feature>
<feature type="helix" evidence="15">
    <location>
        <begin position="460"/>
        <end position="471"/>
    </location>
</feature>
<feature type="strand" evidence="15">
    <location>
        <begin position="474"/>
        <end position="479"/>
    </location>
</feature>
<feature type="helix" evidence="15">
    <location>
        <begin position="484"/>
        <end position="499"/>
    </location>
</feature>
<feature type="helix" evidence="15">
    <location>
        <begin position="503"/>
        <end position="505"/>
    </location>
</feature>
<feature type="helix" evidence="15">
    <location>
        <begin position="507"/>
        <end position="510"/>
    </location>
</feature>
<feature type="strand" evidence="15">
    <location>
        <begin position="517"/>
        <end position="525"/>
    </location>
</feature>
<feature type="strand" evidence="15">
    <location>
        <begin position="528"/>
        <end position="532"/>
    </location>
</feature>
<feature type="helix" evidence="15">
    <location>
        <begin position="536"/>
        <end position="548"/>
    </location>
</feature>
<feature type="helix" evidence="15">
    <location>
        <begin position="551"/>
        <end position="555"/>
    </location>
</feature>
<feature type="strand" evidence="15">
    <location>
        <begin position="560"/>
        <end position="569"/>
    </location>
</feature>
<feature type="strand" evidence="15">
    <location>
        <begin position="593"/>
        <end position="600"/>
    </location>
</feature>
<feature type="strand" evidence="15">
    <location>
        <begin position="603"/>
        <end position="612"/>
    </location>
</feature>
<feature type="helix" evidence="15">
    <location>
        <begin position="626"/>
        <end position="637"/>
    </location>
</feature>
<feature type="helix" evidence="15">
    <location>
        <begin position="638"/>
        <end position="642"/>
    </location>
</feature>
<feature type="helix" evidence="15">
    <location>
        <begin position="643"/>
        <end position="651"/>
    </location>
</feature>
<feature type="strand" evidence="15">
    <location>
        <begin position="654"/>
        <end position="656"/>
    </location>
</feature>
<feature type="helix" evidence="15">
    <location>
        <begin position="662"/>
        <end position="665"/>
    </location>
</feature>
<feature type="helix" evidence="15">
    <location>
        <begin position="783"/>
        <end position="788"/>
    </location>
</feature>
<feature type="strand" evidence="15">
    <location>
        <begin position="792"/>
        <end position="796"/>
    </location>
</feature>
<feature type="strand" evidence="15">
    <location>
        <begin position="799"/>
        <end position="806"/>
    </location>
</feature>
<feature type="turn" evidence="15">
    <location>
        <begin position="807"/>
        <end position="810"/>
    </location>
</feature>
<feature type="strand" evidence="15">
    <location>
        <begin position="811"/>
        <end position="813"/>
    </location>
</feature>
<feature type="helix" evidence="15">
    <location>
        <begin position="818"/>
        <end position="821"/>
    </location>
</feature>
<feature type="helix" evidence="15">
    <location>
        <begin position="826"/>
        <end position="859"/>
    </location>
</feature>
<feature type="strand" evidence="15">
    <location>
        <begin position="875"/>
        <end position="884"/>
    </location>
</feature>
<feature type="strand" evidence="15">
    <location>
        <begin position="901"/>
        <end position="909"/>
    </location>
</feature>
<feature type="strand" evidence="15">
    <location>
        <begin position="911"/>
        <end position="913"/>
    </location>
</feature>
<feature type="strand" evidence="15">
    <location>
        <begin position="915"/>
        <end position="922"/>
    </location>
</feature>
<feature type="helix" evidence="15">
    <location>
        <begin position="929"/>
        <end position="937"/>
    </location>
</feature>
<evidence type="ECO:0000250" key="1">
    <source>
        <dbReference type="UniProtKB" id="D4ACE5"/>
    </source>
</evidence>
<evidence type="ECO:0000250" key="2">
    <source>
        <dbReference type="UniProtKB" id="Q2I0E5"/>
    </source>
</evidence>
<evidence type="ECO:0000250" key="3">
    <source>
        <dbReference type="UniProtKB" id="Q9ULD6"/>
    </source>
</evidence>
<evidence type="ECO:0000255" key="4">
    <source>
        <dbReference type="PROSITE-ProRule" id="PRU00143"/>
    </source>
</evidence>
<evidence type="ECO:0000256" key="5">
    <source>
        <dbReference type="SAM" id="MobiDB-lite"/>
    </source>
</evidence>
<evidence type="ECO:0000269" key="6">
    <source>
    </source>
</evidence>
<evidence type="ECO:0000269" key="7">
    <source>
    </source>
</evidence>
<evidence type="ECO:0000269" key="8">
    <source>
    </source>
</evidence>
<evidence type="ECO:0000269" key="9">
    <source>
    </source>
</evidence>
<evidence type="ECO:0000269" key="10">
    <source>
    </source>
</evidence>
<evidence type="ECO:0000303" key="11">
    <source>
    </source>
</evidence>
<evidence type="ECO:0000305" key="12"/>
<evidence type="ECO:0007744" key="13">
    <source>
        <dbReference type="PDB" id="7Q3E"/>
    </source>
</evidence>
<evidence type="ECO:0007744" key="14">
    <source>
    </source>
</evidence>
<evidence type="ECO:0007829" key="15">
    <source>
        <dbReference type="PDB" id="7Q3E"/>
    </source>
</evidence>
<proteinExistence type="evidence at protein level"/>
<dbReference type="EMBL" id="AK040233">
    <property type="protein sequence ID" value="BAC30547.1"/>
    <property type="molecule type" value="mRNA"/>
</dbReference>
<dbReference type="EMBL" id="AK035092">
    <property type="protein sequence ID" value="BAC28943.1"/>
    <property type="molecule type" value="mRNA"/>
</dbReference>
<dbReference type="EMBL" id="AC146980">
    <property type="status" value="NOT_ANNOTATED_CDS"/>
    <property type="molecule type" value="Genomic_DNA"/>
</dbReference>
<dbReference type="EMBL" id="AC163023">
    <property type="status" value="NOT_ANNOTATED_CDS"/>
    <property type="molecule type" value="Genomic_DNA"/>
</dbReference>
<dbReference type="EMBL" id="CH466530">
    <property type="protein sequence ID" value="EDL35133.1"/>
    <property type="molecule type" value="Genomic_DNA"/>
</dbReference>
<dbReference type="EMBL" id="BC125523">
    <property type="protein sequence ID" value="AAI25524.1"/>
    <property type="molecule type" value="mRNA"/>
</dbReference>
<dbReference type="EMBL" id="BC132387">
    <property type="protein sequence ID" value="AAI32388.1"/>
    <property type="molecule type" value="mRNA"/>
</dbReference>
<dbReference type="EMBL" id="AK122485">
    <property type="protein sequence ID" value="BAC65767.1"/>
    <property type="molecule type" value="mRNA"/>
</dbReference>
<dbReference type="CCDS" id="CCDS84619.1">
    <molecule id="Q059U7-1"/>
</dbReference>
<dbReference type="RefSeq" id="NP_780724.3">
    <molecule id="Q059U7-1"/>
    <property type="nucleotide sequence ID" value="NM_175515.5"/>
</dbReference>
<dbReference type="PDB" id="7Q3E">
    <property type="method" value="EM"/>
    <property type="resolution" value="3.35 A"/>
    <property type="chains" value="B=54-942"/>
</dbReference>
<dbReference type="PDBsum" id="7Q3E"/>
<dbReference type="EMDB" id="EMD-13790"/>
<dbReference type="SMR" id="Q059U7"/>
<dbReference type="ComplexPortal" id="CPX-5026">
    <property type="entry name" value="CPLANE complex"/>
</dbReference>
<dbReference type="CORUM" id="Q059U7"/>
<dbReference type="FunCoup" id="Q059U7">
    <property type="interactions" value="552"/>
</dbReference>
<dbReference type="STRING" id="10090.ENSMUSP00000088725"/>
<dbReference type="iPTMnet" id="Q059U7"/>
<dbReference type="PhosphoSitePlus" id="Q059U7"/>
<dbReference type="jPOST" id="Q059U7"/>
<dbReference type="PaxDb" id="10090-ENSMUSP00000088725"/>
<dbReference type="ProteomicsDB" id="267145">
    <molecule id="Q059U7-1"/>
</dbReference>
<dbReference type="ProteomicsDB" id="267146">
    <molecule id="Q059U7-2"/>
</dbReference>
<dbReference type="Antibodypedia" id="26899">
    <property type="antibodies" value="74 antibodies from 16 providers"/>
</dbReference>
<dbReference type="DNASU" id="380614"/>
<dbReference type="Ensembl" id="ENSMUST00000061590.6">
    <molecule id="Q059U7-2"/>
    <property type="protein sequence ID" value="ENSMUSP00000054313.5"/>
    <property type="gene ID" value="ENSMUSG00000060798.8"/>
</dbReference>
<dbReference type="Ensembl" id="ENSMUST00000091186.7">
    <molecule id="Q059U7-1"/>
    <property type="protein sequence ID" value="ENSMUSP00000088725.4"/>
    <property type="gene ID" value="ENSMUSG00000060798.8"/>
</dbReference>
<dbReference type="GeneID" id="380614"/>
<dbReference type="KEGG" id="mmu:380614"/>
<dbReference type="UCSC" id="uc033htd.1">
    <molecule id="Q059U7-1"/>
    <property type="organism name" value="mouse"/>
</dbReference>
<dbReference type="AGR" id="MGI:2443752"/>
<dbReference type="CTD" id="27152"/>
<dbReference type="MGI" id="MGI:2443752">
    <property type="gene designation" value="Intu"/>
</dbReference>
<dbReference type="VEuPathDB" id="HostDB:ENSMUSG00000060798"/>
<dbReference type="eggNOG" id="ENOG502QQJQ">
    <property type="taxonomic scope" value="Eukaryota"/>
</dbReference>
<dbReference type="GeneTree" id="ENSGT00390000001301"/>
<dbReference type="HOGENOM" id="CLU_104236_0_0_1"/>
<dbReference type="InParanoid" id="Q059U7"/>
<dbReference type="OMA" id="WENFAEQ"/>
<dbReference type="OrthoDB" id="10038586at2759"/>
<dbReference type="PhylomeDB" id="Q059U7"/>
<dbReference type="TreeFam" id="TF323932"/>
<dbReference type="Reactome" id="R-MMU-5610787">
    <property type="pathway name" value="Hedgehog 'off' state"/>
</dbReference>
<dbReference type="BioGRID-ORCS" id="380614">
    <property type="hits" value="1 hit in 22 CRISPR screens"/>
</dbReference>
<dbReference type="ChiTaRS" id="Intu">
    <property type="organism name" value="mouse"/>
</dbReference>
<dbReference type="PRO" id="PR:Q059U7"/>
<dbReference type="Proteomes" id="UP000000589">
    <property type="component" value="Chromosome 3"/>
</dbReference>
<dbReference type="RNAct" id="Q059U7">
    <property type="molecule type" value="protein"/>
</dbReference>
<dbReference type="Bgee" id="ENSMUSG00000060798">
    <property type="expression patterns" value="Expressed in ventricular zone and 72 other cell types or tissues"/>
</dbReference>
<dbReference type="ExpressionAtlas" id="Q059U7">
    <property type="expression patterns" value="baseline and differential"/>
</dbReference>
<dbReference type="GO" id="GO:0009986">
    <property type="term" value="C:cell surface"/>
    <property type="evidence" value="ECO:0007669"/>
    <property type="project" value="UniProtKB-SubCell"/>
</dbReference>
<dbReference type="GO" id="GO:0005814">
    <property type="term" value="C:centriole"/>
    <property type="evidence" value="ECO:0000314"/>
    <property type="project" value="MGI"/>
</dbReference>
<dbReference type="GO" id="GO:0036064">
    <property type="term" value="C:ciliary basal body"/>
    <property type="evidence" value="ECO:0007669"/>
    <property type="project" value="Ensembl"/>
</dbReference>
<dbReference type="GO" id="GO:0035869">
    <property type="term" value="C:ciliary transition zone"/>
    <property type="evidence" value="ECO:0000314"/>
    <property type="project" value="MGI"/>
</dbReference>
<dbReference type="GO" id="GO:0005929">
    <property type="term" value="C:cilium"/>
    <property type="evidence" value="ECO:0000303"/>
    <property type="project" value="ComplexPortal"/>
</dbReference>
<dbReference type="GO" id="GO:0005737">
    <property type="term" value="C:cytoplasm"/>
    <property type="evidence" value="ECO:0000314"/>
    <property type="project" value="UniProtKB"/>
</dbReference>
<dbReference type="GO" id="GO:0005829">
    <property type="term" value="C:cytosol"/>
    <property type="evidence" value="ECO:0007669"/>
    <property type="project" value="Ensembl"/>
</dbReference>
<dbReference type="GO" id="GO:0043231">
    <property type="term" value="C:intracellular membrane-bounded organelle"/>
    <property type="evidence" value="ECO:0007669"/>
    <property type="project" value="Ensembl"/>
</dbReference>
<dbReference type="GO" id="GO:0031514">
    <property type="term" value="C:motile cilium"/>
    <property type="evidence" value="ECO:0007669"/>
    <property type="project" value="Ensembl"/>
</dbReference>
<dbReference type="GO" id="GO:0035091">
    <property type="term" value="F:phosphatidylinositol binding"/>
    <property type="evidence" value="ECO:0000314"/>
    <property type="project" value="UniProtKB"/>
</dbReference>
<dbReference type="GO" id="GO:0051301">
    <property type="term" value="P:cell division"/>
    <property type="evidence" value="ECO:0000315"/>
    <property type="project" value="MGI"/>
</dbReference>
<dbReference type="GO" id="GO:0060271">
    <property type="term" value="P:cilium assembly"/>
    <property type="evidence" value="ECO:0000315"/>
    <property type="project" value="UniProtKB"/>
</dbReference>
<dbReference type="GO" id="GO:0042733">
    <property type="term" value="P:embryonic digit morphogenesis"/>
    <property type="evidence" value="ECO:0000315"/>
    <property type="project" value="MGI"/>
</dbReference>
<dbReference type="GO" id="GO:0001736">
    <property type="term" value="P:establishment of planar polarity"/>
    <property type="evidence" value="ECO:0000303"/>
    <property type="project" value="ComplexPortal"/>
</dbReference>
<dbReference type="GO" id="GO:0031069">
    <property type="term" value="P:hair follicle morphogenesis"/>
    <property type="evidence" value="ECO:0000315"/>
    <property type="project" value="MGI"/>
</dbReference>
<dbReference type="GO" id="GO:0042073">
    <property type="term" value="P:intraciliary transport"/>
    <property type="evidence" value="ECO:0000303"/>
    <property type="project" value="ComplexPortal"/>
</dbReference>
<dbReference type="GO" id="GO:0030216">
    <property type="term" value="P:keratinocyte differentiation"/>
    <property type="evidence" value="ECO:0000315"/>
    <property type="project" value="MGI"/>
</dbReference>
<dbReference type="GO" id="GO:0060173">
    <property type="term" value="P:limb development"/>
    <property type="evidence" value="ECO:0000315"/>
    <property type="project" value="UniProtKB"/>
</dbReference>
<dbReference type="GO" id="GO:0044458">
    <property type="term" value="P:motile cilium assembly"/>
    <property type="evidence" value="ECO:0000315"/>
    <property type="project" value="MGI"/>
</dbReference>
<dbReference type="GO" id="GO:0051782">
    <property type="term" value="P:negative regulation of cell division"/>
    <property type="evidence" value="ECO:0000315"/>
    <property type="project" value="MGI"/>
</dbReference>
<dbReference type="GO" id="GO:0010839">
    <property type="term" value="P:negative regulation of keratinocyte proliferation"/>
    <property type="evidence" value="ECO:0000315"/>
    <property type="project" value="MGI"/>
</dbReference>
<dbReference type="GO" id="GO:0007399">
    <property type="term" value="P:nervous system development"/>
    <property type="evidence" value="ECO:0000315"/>
    <property type="project" value="UniProtKB"/>
</dbReference>
<dbReference type="GO" id="GO:0021915">
    <property type="term" value="P:neural tube development"/>
    <property type="evidence" value="ECO:0000315"/>
    <property type="project" value="MGI"/>
</dbReference>
<dbReference type="GO" id="GO:1905515">
    <property type="term" value="P:non-motile cilium assembly"/>
    <property type="evidence" value="ECO:0000315"/>
    <property type="project" value="MGI"/>
</dbReference>
<dbReference type="GO" id="GO:0045880">
    <property type="term" value="P:positive regulation of smoothened signaling pathway"/>
    <property type="evidence" value="ECO:0000315"/>
    <property type="project" value="MGI"/>
</dbReference>
<dbReference type="GO" id="GO:0033365">
    <property type="term" value="P:protein localization to organelle"/>
    <property type="evidence" value="ECO:0000315"/>
    <property type="project" value="MGI"/>
</dbReference>
<dbReference type="GO" id="GO:1902017">
    <property type="term" value="P:regulation of cilium assembly"/>
    <property type="evidence" value="ECO:0000303"/>
    <property type="project" value="ComplexPortal"/>
</dbReference>
<dbReference type="GO" id="GO:0030278">
    <property type="term" value="P:regulation of ossification"/>
    <property type="evidence" value="ECO:0000315"/>
    <property type="project" value="MGI"/>
</dbReference>
<dbReference type="GO" id="GO:0008589">
    <property type="term" value="P:regulation of smoothened signaling pathway"/>
    <property type="evidence" value="ECO:0000315"/>
    <property type="project" value="UniProtKB"/>
</dbReference>
<dbReference type="GO" id="GO:0060021">
    <property type="term" value="P:roof of mouth development"/>
    <property type="evidence" value="ECO:0007669"/>
    <property type="project" value="Ensembl"/>
</dbReference>
<dbReference type="GO" id="GO:0007224">
    <property type="term" value="P:smoothened signaling pathway"/>
    <property type="evidence" value="ECO:0000315"/>
    <property type="project" value="MGI"/>
</dbReference>
<dbReference type="GO" id="GO:0021513">
    <property type="term" value="P:spinal cord dorsal/ventral patterning"/>
    <property type="evidence" value="ECO:0000315"/>
    <property type="project" value="MGI"/>
</dbReference>
<dbReference type="GO" id="GO:0043587">
    <property type="term" value="P:tongue morphogenesis"/>
    <property type="evidence" value="ECO:0007669"/>
    <property type="project" value="Ensembl"/>
</dbReference>
<dbReference type="GO" id="GO:0016192">
    <property type="term" value="P:vesicle-mediated transport"/>
    <property type="evidence" value="ECO:0007669"/>
    <property type="project" value="InterPro"/>
</dbReference>
<dbReference type="Gene3D" id="2.30.42.10">
    <property type="match status" value="1"/>
</dbReference>
<dbReference type="InterPro" id="IPR043987">
    <property type="entry name" value="CCZ1/INTU/HSP4_longin_1"/>
</dbReference>
<dbReference type="InterPro" id="IPR043989">
    <property type="entry name" value="CCZ1/INTU/HSP4_longin_3"/>
</dbReference>
<dbReference type="InterPro" id="IPR043988">
    <property type="entry name" value="CCZ1/INTU_longin_2"/>
</dbReference>
<dbReference type="InterPro" id="IPR039151">
    <property type="entry name" value="INTU"/>
</dbReference>
<dbReference type="InterPro" id="IPR001478">
    <property type="entry name" value="PDZ"/>
</dbReference>
<dbReference type="InterPro" id="IPR036034">
    <property type="entry name" value="PDZ_sf"/>
</dbReference>
<dbReference type="PANTHER" id="PTHR21082">
    <property type="entry name" value="PROTEIN INTURNED"/>
    <property type="match status" value="1"/>
</dbReference>
<dbReference type="PANTHER" id="PTHR21082:SF4">
    <property type="entry name" value="PROTEIN INTURNED"/>
    <property type="match status" value="1"/>
</dbReference>
<dbReference type="Pfam" id="PF19031">
    <property type="entry name" value="Intu_longin_1"/>
    <property type="match status" value="1"/>
</dbReference>
<dbReference type="Pfam" id="PF19032">
    <property type="entry name" value="Intu_longin_2"/>
    <property type="match status" value="1"/>
</dbReference>
<dbReference type="Pfam" id="PF19033">
    <property type="entry name" value="Intu_longin_3"/>
    <property type="match status" value="1"/>
</dbReference>
<dbReference type="SMART" id="SM00228">
    <property type="entry name" value="PDZ"/>
    <property type="match status" value="1"/>
</dbReference>
<dbReference type="SUPFAM" id="SSF50156">
    <property type="entry name" value="PDZ domain-like"/>
    <property type="match status" value="1"/>
</dbReference>
<dbReference type="PROSITE" id="PS50106">
    <property type="entry name" value="PDZ"/>
    <property type="match status" value="1"/>
</dbReference>
<keyword id="KW-0002">3D-structure</keyword>
<keyword id="KW-0025">Alternative splicing</keyword>
<keyword id="KW-0966">Cell projection</keyword>
<keyword id="KW-0970">Cilium biogenesis/degradation</keyword>
<keyword id="KW-0963">Cytoplasm</keyword>
<keyword id="KW-0206">Cytoskeleton</keyword>
<keyword id="KW-0217">Developmental protein</keyword>
<keyword id="KW-0597">Phosphoprotein</keyword>
<keyword id="KW-1185">Reference proteome</keyword>
<organism>
    <name type="scientific">Mus musculus</name>
    <name type="common">Mouse</name>
    <dbReference type="NCBI Taxonomy" id="10090"/>
    <lineage>
        <taxon>Eukaryota</taxon>
        <taxon>Metazoa</taxon>
        <taxon>Chordata</taxon>
        <taxon>Craniata</taxon>
        <taxon>Vertebrata</taxon>
        <taxon>Euteleostomi</taxon>
        <taxon>Mammalia</taxon>
        <taxon>Eutheria</taxon>
        <taxon>Euarchontoglires</taxon>
        <taxon>Glires</taxon>
        <taxon>Rodentia</taxon>
        <taxon>Myomorpha</taxon>
        <taxon>Muroidea</taxon>
        <taxon>Muridae</taxon>
        <taxon>Murinae</taxon>
        <taxon>Mus</taxon>
        <taxon>Mus</taxon>
    </lineage>
</organism>
<gene>
    <name type="primary">Intu</name>
    <name type="synonym">Kiaa1284</name>
    <name type="synonym">Pdzd6</name>
</gene>
<reference key="1">
    <citation type="journal article" date="2005" name="Science">
        <title>The transcriptional landscape of the mammalian genome.</title>
        <authorList>
            <person name="Carninci P."/>
            <person name="Kasukawa T."/>
            <person name="Katayama S."/>
            <person name="Gough J."/>
            <person name="Frith M.C."/>
            <person name="Maeda N."/>
            <person name="Oyama R."/>
            <person name="Ravasi T."/>
            <person name="Lenhard B."/>
            <person name="Wells C."/>
            <person name="Kodzius R."/>
            <person name="Shimokawa K."/>
            <person name="Bajic V.B."/>
            <person name="Brenner S.E."/>
            <person name="Batalov S."/>
            <person name="Forrest A.R."/>
            <person name="Zavolan M."/>
            <person name="Davis M.J."/>
            <person name="Wilming L.G."/>
            <person name="Aidinis V."/>
            <person name="Allen J.E."/>
            <person name="Ambesi-Impiombato A."/>
            <person name="Apweiler R."/>
            <person name="Aturaliya R.N."/>
            <person name="Bailey T.L."/>
            <person name="Bansal M."/>
            <person name="Baxter L."/>
            <person name="Beisel K.W."/>
            <person name="Bersano T."/>
            <person name="Bono H."/>
            <person name="Chalk A.M."/>
            <person name="Chiu K.P."/>
            <person name="Choudhary V."/>
            <person name="Christoffels A."/>
            <person name="Clutterbuck D.R."/>
            <person name="Crowe M.L."/>
            <person name="Dalla E."/>
            <person name="Dalrymple B.P."/>
            <person name="de Bono B."/>
            <person name="Della Gatta G."/>
            <person name="di Bernardo D."/>
            <person name="Down T."/>
            <person name="Engstrom P."/>
            <person name="Fagiolini M."/>
            <person name="Faulkner G."/>
            <person name="Fletcher C.F."/>
            <person name="Fukushima T."/>
            <person name="Furuno M."/>
            <person name="Futaki S."/>
            <person name="Gariboldi M."/>
            <person name="Georgii-Hemming P."/>
            <person name="Gingeras T.R."/>
            <person name="Gojobori T."/>
            <person name="Green R.E."/>
            <person name="Gustincich S."/>
            <person name="Harbers M."/>
            <person name="Hayashi Y."/>
            <person name="Hensch T.K."/>
            <person name="Hirokawa N."/>
            <person name="Hill D."/>
            <person name="Huminiecki L."/>
            <person name="Iacono M."/>
            <person name="Ikeo K."/>
            <person name="Iwama A."/>
            <person name="Ishikawa T."/>
            <person name="Jakt M."/>
            <person name="Kanapin A."/>
            <person name="Katoh M."/>
            <person name="Kawasawa Y."/>
            <person name="Kelso J."/>
            <person name="Kitamura H."/>
            <person name="Kitano H."/>
            <person name="Kollias G."/>
            <person name="Krishnan S.P."/>
            <person name="Kruger A."/>
            <person name="Kummerfeld S.K."/>
            <person name="Kurochkin I.V."/>
            <person name="Lareau L.F."/>
            <person name="Lazarevic D."/>
            <person name="Lipovich L."/>
            <person name="Liu J."/>
            <person name="Liuni S."/>
            <person name="McWilliam S."/>
            <person name="Madan Babu M."/>
            <person name="Madera M."/>
            <person name="Marchionni L."/>
            <person name="Matsuda H."/>
            <person name="Matsuzawa S."/>
            <person name="Miki H."/>
            <person name="Mignone F."/>
            <person name="Miyake S."/>
            <person name="Morris K."/>
            <person name="Mottagui-Tabar S."/>
            <person name="Mulder N."/>
            <person name="Nakano N."/>
            <person name="Nakauchi H."/>
            <person name="Ng P."/>
            <person name="Nilsson R."/>
            <person name="Nishiguchi S."/>
            <person name="Nishikawa S."/>
            <person name="Nori F."/>
            <person name="Ohara O."/>
            <person name="Okazaki Y."/>
            <person name="Orlando V."/>
            <person name="Pang K.C."/>
            <person name="Pavan W.J."/>
            <person name="Pavesi G."/>
            <person name="Pesole G."/>
            <person name="Petrovsky N."/>
            <person name="Piazza S."/>
            <person name="Reed J."/>
            <person name="Reid J.F."/>
            <person name="Ring B.Z."/>
            <person name="Ringwald M."/>
            <person name="Rost B."/>
            <person name="Ruan Y."/>
            <person name="Salzberg S.L."/>
            <person name="Sandelin A."/>
            <person name="Schneider C."/>
            <person name="Schoenbach C."/>
            <person name="Sekiguchi K."/>
            <person name="Semple C.A."/>
            <person name="Seno S."/>
            <person name="Sessa L."/>
            <person name="Sheng Y."/>
            <person name="Shibata Y."/>
            <person name="Shimada H."/>
            <person name="Shimada K."/>
            <person name="Silva D."/>
            <person name="Sinclair B."/>
            <person name="Sperling S."/>
            <person name="Stupka E."/>
            <person name="Sugiura K."/>
            <person name="Sultana R."/>
            <person name="Takenaka Y."/>
            <person name="Taki K."/>
            <person name="Tammoja K."/>
            <person name="Tan S.L."/>
            <person name="Tang S."/>
            <person name="Taylor M.S."/>
            <person name="Tegner J."/>
            <person name="Teichmann S.A."/>
            <person name="Ueda H.R."/>
            <person name="van Nimwegen E."/>
            <person name="Verardo R."/>
            <person name="Wei C.L."/>
            <person name="Yagi K."/>
            <person name="Yamanishi H."/>
            <person name="Zabarovsky E."/>
            <person name="Zhu S."/>
            <person name="Zimmer A."/>
            <person name="Hide W."/>
            <person name="Bult C."/>
            <person name="Grimmond S.M."/>
            <person name="Teasdale R.D."/>
            <person name="Liu E.T."/>
            <person name="Brusic V."/>
            <person name="Quackenbush J."/>
            <person name="Wahlestedt C."/>
            <person name="Mattick J.S."/>
            <person name="Hume D.A."/>
            <person name="Kai C."/>
            <person name="Sasaki D."/>
            <person name="Tomaru Y."/>
            <person name="Fukuda S."/>
            <person name="Kanamori-Katayama M."/>
            <person name="Suzuki M."/>
            <person name="Aoki J."/>
            <person name="Arakawa T."/>
            <person name="Iida J."/>
            <person name="Imamura K."/>
            <person name="Itoh M."/>
            <person name="Kato T."/>
            <person name="Kawaji H."/>
            <person name="Kawagashira N."/>
            <person name="Kawashima T."/>
            <person name="Kojima M."/>
            <person name="Kondo S."/>
            <person name="Konno H."/>
            <person name="Nakano K."/>
            <person name="Ninomiya N."/>
            <person name="Nishio T."/>
            <person name="Okada M."/>
            <person name="Plessy C."/>
            <person name="Shibata K."/>
            <person name="Shiraki T."/>
            <person name="Suzuki S."/>
            <person name="Tagami M."/>
            <person name="Waki K."/>
            <person name="Watahiki A."/>
            <person name="Okamura-Oho Y."/>
            <person name="Suzuki H."/>
            <person name="Kawai J."/>
            <person name="Hayashizaki Y."/>
        </authorList>
    </citation>
    <scope>NUCLEOTIDE SEQUENCE [LARGE SCALE MRNA] (ISOFORM 2)</scope>
    <scope>NUCLEOTIDE SEQUENCE [LARGE SCALE MRNA] OF 1-774 (ISOFORM 1)</scope>
    <source>
        <strain>C57BL/6J</strain>
        <tissue>Embryo</tissue>
        <tissue>Thymus</tissue>
    </source>
</reference>
<reference key="2">
    <citation type="journal article" date="2009" name="PLoS Biol.">
        <title>Lineage-specific biology revealed by a finished genome assembly of the mouse.</title>
        <authorList>
            <person name="Church D.M."/>
            <person name="Goodstadt L."/>
            <person name="Hillier L.W."/>
            <person name="Zody M.C."/>
            <person name="Goldstein S."/>
            <person name="She X."/>
            <person name="Bult C.J."/>
            <person name="Agarwala R."/>
            <person name="Cherry J.L."/>
            <person name="DiCuccio M."/>
            <person name="Hlavina W."/>
            <person name="Kapustin Y."/>
            <person name="Meric P."/>
            <person name="Maglott D."/>
            <person name="Birtle Z."/>
            <person name="Marques A.C."/>
            <person name="Graves T."/>
            <person name="Zhou S."/>
            <person name="Teague B."/>
            <person name="Potamousis K."/>
            <person name="Churas C."/>
            <person name="Place M."/>
            <person name="Herschleb J."/>
            <person name="Runnheim R."/>
            <person name="Forrest D."/>
            <person name="Amos-Landgraf J."/>
            <person name="Schwartz D.C."/>
            <person name="Cheng Z."/>
            <person name="Lindblad-Toh K."/>
            <person name="Eichler E.E."/>
            <person name="Ponting C.P."/>
        </authorList>
    </citation>
    <scope>NUCLEOTIDE SEQUENCE [LARGE SCALE GENOMIC DNA]</scope>
    <source>
        <strain>C57BL/6J</strain>
    </source>
</reference>
<reference key="3">
    <citation type="submission" date="2005-07" db="EMBL/GenBank/DDBJ databases">
        <authorList>
            <person name="Mural R.J."/>
            <person name="Adams M.D."/>
            <person name="Myers E.W."/>
            <person name="Smith H.O."/>
            <person name="Venter J.C."/>
        </authorList>
    </citation>
    <scope>NUCLEOTIDE SEQUENCE [LARGE SCALE GENOMIC DNA]</scope>
</reference>
<reference key="4">
    <citation type="journal article" date="2004" name="Genome Res.">
        <title>The status, quality, and expansion of the NIH full-length cDNA project: the Mammalian Gene Collection (MGC).</title>
        <authorList>
            <consortium name="The MGC Project Team"/>
        </authorList>
    </citation>
    <scope>NUCLEOTIDE SEQUENCE [LARGE SCALE MRNA] (ISOFORM 1)</scope>
    <source>
        <tissue>Brain</tissue>
    </source>
</reference>
<reference key="5">
    <citation type="journal article" date="2003" name="DNA Res.">
        <title>Prediction of the coding sequences of mouse homologues of KIAA gene: II. The complete nucleotide sequences of 400 mouse KIAA-homologous cDNAs identified by screening of terminal sequences of cDNA clones randomly sampled from size-fractionated libraries.</title>
        <authorList>
            <person name="Okazaki N."/>
            <person name="Kikuno R."/>
            <person name="Ohara R."/>
            <person name="Inamoto S."/>
            <person name="Aizawa H."/>
            <person name="Yuasa S."/>
            <person name="Nakajima D."/>
            <person name="Nagase T."/>
            <person name="Ohara O."/>
            <person name="Koga H."/>
        </authorList>
    </citation>
    <scope>NUCLEOTIDE SEQUENCE [LARGE SCALE MRNA] OF 122-942 (ISOFORM 1)</scope>
    <source>
        <tissue>Brain</tissue>
    </source>
</reference>
<reference key="6">
    <citation type="journal article" date="2010" name="Cell">
        <title>A tissue-specific atlas of mouse protein phosphorylation and expression.</title>
        <authorList>
            <person name="Huttlin E.L."/>
            <person name="Jedrychowski M.P."/>
            <person name="Elias J.E."/>
            <person name="Goswami T."/>
            <person name="Rad R."/>
            <person name="Beausoleil S.A."/>
            <person name="Villen J."/>
            <person name="Haas W."/>
            <person name="Sowa M.E."/>
            <person name="Gygi S.P."/>
        </authorList>
    </citation>
    <scope>PHOSPHORYLATION [LARGE SCALE ANALYSIS] AT SER-678</scope>
    <scope>IDENTIFICATION BY MASS SPECTROMETRY [LARGE SCALE ANALYSIS]</scope>
    <source>
        <tissue>Testis</tissue>
    </source>
</reference>
<reference key="7">
    <citation type="journal article" date="2010" name="Dev. Biol.">
        <title>PCP effector gene Inturned is an important regulator of cilia formation and embryonic development in mammals.</title>
        <authorList>
            <person name="Zeng H."/>
            <person name="Hoover A.N."/>
            <person name="Liu A."/>
        </authorList>
    </citation>
    <scope>FUNCTION</scope>
    <scope>TISSUE SPECIFICITY</scope>
    <scope>DISRUPTION PHENOTYPE</scope>
    <scope>SUBCELLULAR LOCATION</scope>
</reference>
<reference key="8">
    <citation type="journal article" date="2011" name="Dev. Dyn.">
        <title>PCP effector proteins inturned and fuzzy play nonredundant roles in the patterning but not convergent extension of mammalian neural tube.</title>
        <authorList>
            <person name="Heydeck W."/>
            <person name="Liu A."/>
        </authorList>
    </citation>
    <scope>FUNCTION</scope>
    <scope>DISRUPTION PHENOTYPE</scope>
</reference>
<reference key="9">
    <citation type="journal article" date="2016" name="Nat. Genet.">
        <title>The ciliopathy-associated CPLANE proteins direct basal body recruitment of intraflagellar transport machinery.</title>
        <authorList>
            <person name="Toriyama M."/>
            <person name="Lee C."/>
            <person name="Taylor S.P."/>
            <person name="Duran I."/>
            <person name="Cohn D.H."/>
            <person name="Bruel A.L."/>
            <person name="Tabler J.M."/>
            <person name="Drew K."/>
            <person name="Kelly M.R."/>
            <person name="Kim S."/>
            <person name="Park T.J."/>
            <person name="Braun D.A."/>
            <person name="Pierquin G."/>
            <person name="Biver A."/>
            <person name="Wagner K."/>
            <person name="Malfroot A."/>
            <person name="Panigrahi I."/>
            <person name="Franco B."/>
            <person name="Al-Lami H.A."/>
            <person name="Yeung Y."/>
            <person name="Choi Y.J."/>
            <person name="Duffourd Y."/>
            <person name="Faivre L."/>
            <person name="Riviere J.B."/>
            <person name="Chen J."/>
            <person name="Liu K.J."/>
            <person name="Marcotte E.M."/>
            <person name="Hildebrandt F."/>
            <person name="Thauvin-Robinet C."/>
            <person name="Krakow D."/>
            <person name="Jackson P.K."/>
            <person name="Wallingford J.B."/>
        </authorList>
    </citation>
    <scope>SUBUNIT</scope>
    <scope>INTERACTION WITH CPLANE1</scope>
</reference>
<reference key="10">
    <citation type="journal article" date="2018" name="J. Cell Biol.">
        <title>The small GTPase RSG1 controls a final step in primary cilia initiation.</title>
        <authorList>
            <person name="Agbu S.O."/>
            <person name="Liang Y."/>
            <person name="Liu A."/>
            <person name="Anderson K.V."/>
        </authorList>
    </citation>
    <scope>FUNCTION</scope>
    <scope>SUBCELLULAR LOCATION</scope>
</reference>
<reference evidence="13" key="11">
    <citation type="journal article" date="2022" name="Sci. Adv.">
        <title>Structure of the ciliogenesis-associated CPLANE complex.</title>
        <authorList>
            <person name="Langousis G."/>
            <person name="Cavadini S."/>
            <person name="Boegholm N."/>
            <person name="Lorentzen E."/>
            <person name="Kempf G."/>
            <person name="Matthias P."/>
        </authorList>
    </citation>
    <scope>STRUCTURE BY ELECTRON MICROSCOPY (3.35 ANGSTROMS) OF 54-942</scope>
    <scope>FUNCTION</scope>
    <scope>IDENTIFICATION IN THE CPLANE COMPLEX</scope>
</reference>
<protein>
    <recommendedName>
        <fullName>Protein inturned</fullName>
    </recommendedName>
    <alternativeName>
        <fullName>Inturned planar cell polarity effector homolog</fullName>
    </alternativeName>
    <alternativeName>
        <fullName>PDZ domain-containing protein 6</fullName>
    </alternativeName>
</protein>
<sequence>MAGLARGDSRGRPPELPGDLSSQEEEEEEGDSDAGASSLGSYSSASSDTDVEPEWLDSVQKNGELFYLELSEDEEESLLPETQTANHVNHVRFSDKEVIIEEDDSRERKKSEPKLRRFTKILKSKSLLPRRHHKKSSSNNGPVSILKHQSSQKTGVTVQQRYKDVTVYINPRKLTAIKAREQVKLLEVLVGIIHQTKRSWKRSAKQADGERLVVHGLLPGGSAMKSGQVLVGDVLVAVNDVDVTSENIERVLSCIPGPMQVKLTFENAYAVKRETAQPQKKKAQSSTQDLVKLLCGSEADAVQHSTLSIPHISMYLTLQLQSEAAREEQEILYHYPVSEASQKLKSVRGIFLTLCDMLESVTGTQVTSSSLHLNGKQIHVAYLKESDKLLLIGLPAEEVPLPQLRNMIEDVAQTLKFMYGSLDSAFCQVENAPRLDHFFSLFFERALRPGKLHLSGSPSAQQYAAASAVLLDNLPGVRWLVLPQELKVELDTALSDLEAADFEELSEDYYDMRRLYTILGSSLFYKGYMVCSHLPKDDVIEIAAYCRQHCLLPLAAKQRIGQLIIWREVFPRHHLQPPSDSDPEAFQEPEGRYFLLVVGLRHYLLCVLLEAGGCASKATGNPGPDCIYVDQVRATLHQLEGVDSRIEEQLATSPGPCLSCADWFLAAPREKADSLTTSPILSRLQGPSKTAASPTCRRTFFSDYSFKARKPSPSRIGGGREPTEGEESAGLSPHATPDAVRKQRESEGSDDNVALLKLARKKSTLPNPFHLGTSKKELSEKELEVYDIMKLTSGPENTLFHYVALETVQGIFITPTHEEVAQLGGSVHSQLIKNFHQCCLSIRAFFQQTLKEEKKKALSDGEHSEPTNSVSSLSPVKEHGVLFECSPENWTDQKKTPPVMSYWVVGRLFLNPKPQELYVCFHDSVSEIAIEMAFKLFFGLTL</sequence>